<proteinExistence type="inferred from homology"/>
<gene>
    <name evidence="1" type="primary">ureB</name>
    <name type="ordered locus">MT1897</name>
</gene>
<reference key="1">
    <citation type="journal article" date="2002" name="J. Bacteriol.">
        <title>Whole-genome comparison of Mycobacterium tuberculosis clinical and laboratory strains.</title>
        <authorList>
            <person name="Fleischmann R.D."/>
            <person name="Alland D."/>
            <person name="Eisen J.A."/>
            <person name="Carpenter L."/>
            <person name="White O."/>
            <person name="Peterson J.D."/>
            <person name="DeBoy R.T."/>
            <person name="Dodson R.J."/>
            <person name="Gwinn M.L."/>
            <person name="Haft D.H."/>
            <person name="Hickey E.K."/>
            <person name="Kolonay J.F."/>
            <person name="Nelson W.C."/>
            <person name="Umayam L.A."/>
            <person name="Ermolaeva M.D."/>
            <person name="Salzberg S.L."/>
            <person name="Delcher A."/>
            <person name="Utterback T.R."/>
            <person name="Weidman J.F."/>
            <person name="Khouri H.M."/>
            <person name="Gill J."/>
            <person name="Mikula A."/>
            <person name="Bishai W."/>
            <person name="Jacobs W.R. Jr."/>
            <person name="Venter J.C."/>
            <person name="Fraser C.M."/>
        </authorList>
    </citation>
    <scope>NUCLEOTIDE SEQUENCE [LARGE SCALE GENOMIC DNA]</scope>
    <source>
        <strain>CDC 1551 / Oshkosh</strain>
    </source>
</reference>
<sequence>MIPGEIFYGSGDIEMNAAALSRLQMRIINAGDRPVQVGSHVHLPQANRALSFDRATAHGYRLDIPAATAVRFEPGIPQIVGLVPLGGRREVPGLTLNPPGRLDR</sequence>
<organism>
    <name type="scientific">Mycobacterium tuberculosis (strain CDC 1551 / Oshkosh)</name>
    <dbReference type="NCBI Taxonomy" id="83331"/>
    <lineage>
        <taxon>Bacteria</taxon>
        <taxon>Bacillati</taxon>
        <taxon>Actinomycetota</taxon>
        <taxon>Actinomycetes</taxon>
        <taxon>Mycobacteriales</taxon>
        <taxon>Mycobacteriaceae</taxon>
        <taxon>Mycobacterium</taxon>
        <taxon>Mycobacterium tuberculosis complex</taxon>
    </lineage>
</organism>
<evidence type="ECO:0000255" key="1">
    <source>
        <dbReference type="HAMAP-Rule" id="MF_01954"/>
    </source>
</evidence>
<comment type="catalytic activity">
    <reaction evidence="1">
        <text>urea + 2 H2O + H(+) = hydrogencarbonate + 2 NH4(+)</text>
        <dbReference type="Rhea" id="RHEA:20557"/>
        <dbReference type="ChEBI" id="CHEBI:15377"/>
        <dbReference type="ChEBI" id="CHEBI:15378"/>
        <dbReference type="ChEBI" id="CHEBI:16199"/>
        <dbReference type="ChEBI" id="CHEBI:17544"/>
        <dbReference type="ChEBI" id="CHEBI:28938"/>
        <dbReference type="EC" id="3.5.1.5"/>
    </reaction>
</comment>
<comment type="pathway">
    <text evidence="1">Nitrogen metabolism; urea degradation; CO(2) and NH(3) from urea (urease route): step 1/1.</text>
</comment>
<comment type="subunit">
    <text evidence="1">Heterotrimer of UreA (gamma), UreB (beta) and UreC (alpha) subunits. Three heterotrimers associate to form the active enzyme.</text>
</comment>
<comment type="subcellular location">
    <subcellularLocation>
        <location evidence="1">Cytoplasm</location>
    </subcellularLocation>
</comment>
<comment type="similarity">
    <text evidence="1">Belongs to the urease beta subunit family.</text>
</comment>
<dbReference type="EC" id="3.5.1.5" evidence="1"/>
<dbReference type="EMBL" id="AE000516">
    <property type="protein sequence ID" value="AAK46168.1"/>
    <property type="molecule type" value="Genomic_DNA"/>
</dbReference>
<dbReference type="PIR" id="A70665">
    <property type="entry name" value="A70665"/>
</dbReference>
<dbReference type="RefSeq" id="WP_003409308.1">
    <property type="nucleotide sequence ID" value="NZ_KK341227.1"/>
</dbReference>
<dbReference type="SMR" id="P9WFE8"/>
<dbReference type="KEGG" id="mtc:MT1897"/>
<dbReference type="PATRIC" id="fig|83331.31.peg.2041"/>
<dbReference type="HOGENOM" id="CLU_129707_1_1_11"/>
<dbReference type="UniPathway" id="UPA00258">
    <property type="reaction ID" value="UER00370"/>
</dbReference>
<dbReference type="Proteomes" id="UP000001020">
    <property type="component" value="Chromosome"/>
</dbReference>
<dbReference type="GO" id="GO:0035550">
    <property type="term" value="C:urease complex"/>
    <property type="evidence" value="ECO:0007669"/>
    <property type="project" value="InterPro"/>
</dbReference>
<dbReference type="GO" id="GO:0009039">
    <property type="term" value="F:urease activity"/>
    <property type="evidence" value="ECO:0007669"/>
    <property type="project" value="UniProtKB-UniRule"/>
</dbReference>
<dbReference type="GO" id="GO:0043419">
    <property type="term" value="P:urea catabolic process"/>
    <property type="evidence" value="ECO:0007669"/>
    <property type="project" value="UniProtKB-UniRule"/>
</dbReference>
<dbReference type="CDD" id="cd00407">
    <property type="entry name" value="Urease_beta"/>
    <property type="match status" value="1"/>
</dbReference>
<dbReference type="Gene3D" id="2.10.150.10">
    <property type="entry name" value="Urease, beta subunit"/>
    <property type="match status" value="1"/>
</dbReference>
<dbReference type="HAMAP" id="MF_01954">
    <property type="entry name" value="Urease_beta"/>
    <property type="match status" value="1"/>
</dbReference>
<dbReference type="InterPro" id="IPR002019">
    <property type="entry name" value="Urease_beta-like"/>
</dbReference>
<dbReference type="InterPro" id="IPR036461">
    <property type="entry name" value="Urease_betasu_sf"/>
</dbReference>
<dbReference type="InterPro" id="IPR050069">
    <property type="entry name" value="Urease_subunit"/>
</dbReference>
<dbReference type="NCBIfam" id="NF009681">
    <property type="entry name" value="PRK13202.1"/>
    <property type="match status" value="1"/>
</dbReference>
<dbReference type="NCBIfam" id="TIGR00192">
    <property type="entry name" value="urease_beta"/>
    <property type="match status" value="1"/>
</dbReference>
<dbReference type="PANTHER" id="PTHR33569">
    <property type="entry name" value="UREASE"/>
    <property type="match status" value="1"/>
</dbReference>
<dbReference type="PANTHER" id="PTHR33569:SF1">
    <property type="entry name" value="UREASE"/>
    <property type="match status" value="1"/>
</dbReference>
<dbReference type="Pfam" id="PF00699">
    <property type="entry name" value="Urease_beta"/>
    <property type="match status" value="1"/>
</dbReference>
<dbReference type="SUPFAM" id="SSF51278">
    <property type="entry name" value="Urease, beta-subunit"/>
    <property type="match status" value="1"/>
</dbReference>
<accession>P9WFE8</accession>
<accession>L0TAK7</accession>
<accession>P0A662</accession>
<accession>P50048</accession>
<feature type="chain" id="PRO_0000428551" description="Urease subunit beta">
    <location>
        <begin position="1"/>
        <end position="104"/>
    </location>
</feature>
<protein>
    <recommendedName>
        <fullName evidence="1">Urease subunit beta</fullName>
        <ecNumber evidence="1">3.5.1.5</ecNumber>
    </recommendedName>
    <alternativeName>
        <fullName evidence="1">Urea amidohydrolase subunit beta</fullName>
    </alternativeName>
</protein>
<keyword id="KW-0963">Cytoplasm</keyword>
<keyword id="KW-0378">Hydrolase</keyword>
<keyword id="KW-1185">Reference proteome</keyword>
<name>URE2_MYCTO</name>